<dbReference type="EMBL" id="AK158063">
    <property type="protein sequence ID" value="BAE34345.1"/>
    <property type="molecule type" value="mRNA"/>
</dbReference>
<dbReference type="EMBL" id="BC147356">
    <property type="protein sequence ID" value="AAI47357.1"/>
    <property type="molecule type" value="mRNA"/>
</dbReference>
<dbReference type="EMBL" id="BC147357">
    <property type="protein sequence ID" value="AAI47358.1"/>
    <property type="molecule type" value="mRNA"/>
</dbReference>
<dbReference type="CCDS" id="CCDS23980.1"/>
<dbReference type="RefSeq" id="NP_001028645.1">
    <property type="nucleotide sequence ID" value="NM_001033473.2"/>
</dbReference>
<dbReference type="FunCoup" id="Q3TZ65">
    <property type="interactions" value="44"/>
</dbReference>
<dbReference type="STRING" id="10090.ENSMUSP00000093117"/>
<dbReference type="GlyGen" id="Q3TZ65">
    <property type="glycosylation" value="1 site"/>
</dbReference>
<dbReference type="PhosphoSitePlus" id="Q3TZ65"/>
<dbReference type="PaxDb" id="10090-ENSMUSP00000093117"/>
<dbReference type="ProteomicsDB" id="294068"/>
<dbReference type="Antibodypedia" id="67090">
    <property type="antibodies" value="28 antibodies from 10 providers"/>
</dbReference>
<dbReference type="Ensembl" id="ENSMUST00000095464.3">
    <property type="protein sequence ID" value="ENSMUSP00000093117.3"/>
    <property type="gene ID" value="ENSMUSG00000035963.9"/>
</dbReference>
<dbReference type="GeneID" id="382384"/>
<dbReference type="KEGG" id="mmu:382384"/>
<dbReference type="UCSC" id="uc007fze.1">
    <property type="organism name" value="mouse"/>
</dbReference>
<dbReference type="AGR" id="MGI:2686003"/>
<dbReference type="CTD" id="284451"/>
<dbReference type="MGI" id="MGI:2686003">
    <property type="gene designation" value="Cimap1d"/>
</dbReference>
<dbReference type="VEuPathDB" id="HostDB:ENSMUSG00000035963"/>
<dbReference type="eggNOG" id="ENOG502QRKE">
    <property type="taxonomic scope" value="Eukaryota"/>
</dbReference>
<dbReference type="GeneTree" id="ENSGT00940000160480"/>
<dbReference type="HOGENOM" id="CLU_088282_1_0_1"/>
<dbReference type="InParanoid" id="Q3TZ65"/>
<dbReference type="OMA" id="YVNHDCT"/>
<dbReference type="OrthoDB" id="429991at2759"/>
<dbReference type="PhylomeDB" id="Q3TZ65"/>
<dbReference type="TreeFam" id="TF325804"/>
<dbReference type="BioGRID-ORCS" id="382384">
    <property type="hits" value="0 hits in 77 CRISPR screens"/>
</dbReference>
<dbReference type="PRO" id="PR:Q3TZ65"/>
<dbReference type="Proteomes" id="UP000000589">
    <property type="component" value="Chromosome 10"/>
</dbReference>
<dbReference type="RNAct" id="Q3TZ65">
    <property type="molecule type" value="protein"/>
</dbReference>
<dbReference type="Bgee" id="ENSMUSG00000035963">
    <property type="expression patterns" value="Expressed in hindlimb stylopod muscle and 13 other cell types or tissues"/>
</dbReference>
<dbReference type="GO" id="GO:0005881">
    <property type="term" value="C:cytoplasmic microtubule"/>
    <property type="evidence" value="ECO:0000250"/>
    <property type="project" value="UniProtKB"/>
</dbReference>
<dbReference type="InterPro" id="IPR051291">
    <property type="entry name" value="CIMAP"/>
</dbReference>
<dbReference type="InterPro" id="IPR010736">
    <property type="entry name" value="SHIPPO-rpt"/>
</dbReference>
<dbReference type="PANTHER" id="PTHR21580:SF62">
    <property type="entry name" value="OUTER DENSE FIBER PROTEIN 3-LIKE PROTEIN 2"/>
    <property type="match status" value="1"/>
</dbReference>
<dbReference type="PANTHER" id="PTHR21580">
    <property type="entry name" value="SHIPPO-1-RELATED"/>
    <property type="match status" value="1"/>
</dbReference>
<dbReference type="Pfam" id="PF07004">
    <property type="entry name" value="SHIPPO-rpt"/>
    <property type="match status" value="4"/>
</dbReference>
<dbReference type="PRINTS" id="PR01217">
    <property type="entry name" value="PRICHEXTENSN"/>
</dbReference>
<gene>
    <name type="primary">Cimap1d</name>
    <name type="synonym">Gm1157</name>
    <name type="synonym">Odf3l2</name>
</gene>
<protein>
    <recommendedName>
        <fullName>Protein CIMAP1D</fullName>
    </recommendedName>
    <alternativeName>
        <fullName>Outer dense fiber protein 3-like protein 2</fullName>
    </alternativeName>
</protein>
<evidence type="ECO:0000256" key="1">
    <source>
        <dbReference type="SAM" id="MobiDB-lite"/>
    </source>
</evidence>
<evidence type="ECO:0000305" key="2"/>
<keyword id="KW-1185">Reference proteome</keyword>
<keyword id="KW-0677">Repeat</keyword>
<name>CMA1D_MOUSE</name>
<feature type="chain" id="PRO_0000274521" description="Protein CIMAP1D">
    <location>
        <begin position="1"/>
        <end position="277"/>
    </location>
</feature>
<feature type="repeat" description="STPGR 1">
    <location>
        <begin position="122"/>
        <end position="148"/>
    </location>
</feature>
<feature type="repeat" description="STPGR 2">
    <location>
        <begin position="202"/>
        <end position="227"/>
    </location>
</feature>
<feature type="repeat" description="STPGR 3">
    <location>
        <begin position="238"/>
        <end position="263"/>
    </location>
</feature>
<feature type="region of interest" description="Disordered" evidence="1">
    <location>
        <begin position="181"/>
        <end position="277"/>
    </location>
</feature>
<reference key="1">
    <citation type="journal article" date="2005" name="Science">
        <title>The transcriptional landscape of the mammalian genome.</title>
        <authorList>
            <person name="Carninci P."/>
            <person name="Kasukawa T."/>
            <person name="Katayama S."/>
            <person name="Gough J."/>
            <person name="Frith M.C."/>
            <person name="Maeda N."/>
            <person name="Oyama R."/>
            <person name="Ravasi T."/>
            <person name="Lenhard B."/>
            <person name="Wells C."/>
            <person name="Kodzius R."/>
            <person name="Shimokawa K."/>
            <person name="Bajic V.B."/>
            <person name="Brenner S.E."/>
            <person name="Batalov S."/>
            <person name="Forrest A.R."/>
            <person name="Zavolan M."/>
            <person name="Davis M.J."/>
            <person name="Wilming L.G."/>
            <person name="Aidinis V."/>
            <person name="Allen J.E."/>
            <person name="Ambesi-Impiombato A."/>
            <person name="Apweiler R."/>
            <person name="Aturaliya R.N."/>
            <person name="Bailey T.L."/>
            <person name="Bansal M."/>
            <person name="Baxter L."/>
            <person name="Beisel K.W."/>
            <person name="Bersano T."/>
            <person name="Bono H."/>
            <person name="Chalk A.M."/>
            <person name="Chiu K.P."/>
            <person name="Choudhary V."/>
            <person name="Christoffels A."/>
            <person name="Clutterbuck D.R."/>
            <person name="Crowe M.L."/>
            <person name="Dalla E."/>
            <person name="Dalrymple B.P."/>
            <person name="de Bono B."/>
            <person name="Della Gatta G."/>
            <person name="di Bernardo D."/>
            <person name="Down T."/>
            <person name="Engstrom P."/>
            <person name="Fagiolini M."/>
            <person name="Faulkner G."/>
            <person name="Fletcher C.F."/>
            <person name="Fukushima T."/>
            <person name="Furuno M."/>
            <person name="Futaki S."/>
            <person name="Gariboldi M."/>
            <person name="Georgii-Hemming P."/>
            <person name="Gingeras T.R."/>
            <person name="Gojobori T."/>
            <person name="Green R.E."/>
            <person name="Gustincich S."/>
            <person name="Harbers M."/>
            <person name="Hayashi Y."/>
            <person name="Hensch T.K."/>
            <person name="Hirokawa N."/>
            <person name="Hill D."/>
            <person name="Huminiecki L."/>
            <person name="Iacono M."/>
            <person name="Ikeo K."/>
            <person name="Iwama A."/>
            <person name="Ishikawa T."/>
            <person name="Jakt M."/>
            <person name="Kanapin A."/>
            <person name="Katoh M."/>
            <person name="Kawasawa Y."/>
            <person name="Kelso J."/>
            <person name="Kitamura H."/>
            <person name="Kitano H."/>
            <person name="Kollias G."/>
            <person name="Krishnan S.P."/>
            <person name="Kruger A."/>
            <person name="Kummerfeld S.K."/>
            <person name="Kurochkin I.V."/>
            <person name="Lareau L.F."/>
            <person name="Lazarevic D."/>
            <person name="Lipovich L."/>
            <person name="Liu J."/>
            <person name="Liuni S."/>
            <person name="McWilliam S."/>
            <person name="Madan Babu M."/>
            <person name="Madera M."/>
            <person name="Marchionni L."/>
            <person name="Matsuda H."/>
            <person name="Matsuzawa S."/>
            <person name="Miki H."/>
            <person name="Mignone F."/>
            <person name="Miyake S."/>
            <person name="Morris K."/>
            <person name="Mottagui-Tabar S."/>
            <person name="Mulder N."/>
            <person name="Nakano N."/>
            <person name="Nakauchi H."/>
            <person name="Ng P."/>
            <person name="Nilsson R."/>
            <person name="Nishiguchi S."/>
            <person name="Nishikawa S."/>
            <person name="Nori F."/>
            <person name="Ohara O."/>
            <person name="Okazaki Y."/>
            <person name="Orlando V."/>
            <person name="Pang K.C."/>
            <person name="Pavan W.J."/>
            <person name="Pavesi G."/>
            <person name="Pesole G."/>
            <person name="Petrovsky N."/>
            <person name="Piazza S."/>
            <person name="Reed J."/>
            <person name="Reid J.F."/>
            <person name="Ring B.Z."/>
            <person name="Ringwald M."/>
            <person name="Rost B."/>
            <person name="Ruan Y."/>
            <person name="Salzberg S.L."/>
            <person name="Sandelin A."/>
            <person name="Schneider C."/>
            <person name="Schoenbach C."/>
            <person name="Sekiguchi K."/>
            <person name="Semple C.A."/>
            <person name="Seno S."/>
            <person name="Sessa L."/>
            <person name="Sheng Y."/>
            <person name="Shibata Y."/>
            <person name="Shimada H."/>
            <person name="Shimada K."/>
            <person name="Silva D."/>
            <person name="Sinclair B."/>
            <person name="Sperling S."/>
            <person name="Stupka E."/>
            <person name="Sugiura K."/>
            <person name="Sultana R."/>
            <person name="Takenaka Y."/>
            <person name="Taki K."/>
            <person name="Tammoja K."/>
            <person name="Tan S.L."/>
            <person name="Tang S."/>
            <person name="Taylor M.S."/>
            <person name="Tegner J."/>
            <person name="Teichmann S.A."/>
            <person name="Ueda H.R."/>
            <person name="van Nimwegen E."/>
            <person name="Verardo R."/>
            <person name="Wei C.L."/>
            <person name="Yagi K."/>
            <person name="Yamanishi H."/>
            <person name="Zabarovsky E."/>
            <person name="Zhu S."/>
            <person name="Zimmer A."/>
            <person name="Hide W."/>
            <person name="Bult C."/>
            <person name="Grimmond S.M."/>
            <person name="Teasdale R.D."/>
            <person name="Liu E.T."/>
            <person name="Brusic V."/>
            <person name="Quackenbush J."/>
            <person name="Wahlestedt C."/>
            <person name="Mattick J.S."/>
            <person name="Hume D.A."/>
            <person name="Kai C."/>
            <person name="Sasaki D."/>
            <person name="Tomaru Y."/>
            <person name="Fukuda S."/>
            <person name="Kanamori-Katayama M."/>
            <person name="Suzuki M."/>
            <person name="Aoki J."/>
            <person name="Arakawa T."/>
            <person name="Iida J."/>
            <person name="Imamura K."/>
            <person name="Itoh M."/>
            <person name="Kato T."/>
            <person name="Kawaji H."/>
            <person name="Kawagashira N."/>
            <person name="Kawashima T."/>
            <person name="Kojima M."/>
            <person name="Kondo S."/>
            <person name="Konno H."/>
            <person name="Nakano K."/>
            <person name="Ninomiya N."/>
            <person name="Nishio T."/>
            <person name="Okada M."/>
            <person name="Plessy C."/>
            <person name="Shibata K."/>
            <person name="Shiraki T."/>
            <person name="Suzuki S."/>
            <person name="Tagami M."/>
            <person name="Waki K."/>
            <person name="Watahiki A."/>
            <person name="Okamura-Oho Y."/>
            <person name="Suzuki H."/>
            <person name="Kawai J."/>
            <person name="Hayashizaki Y."/>
        </authorList>
    </citation>
    <scope>NUCLEOTIDE SEQUENCE [LARGE SCALE MRNA]</scope>
    <source>
        <strain>C57BL/6J</strain>
        <tissue>Inner ear</tissue>
    </source>
</reference>
<reference key="2">
    <citation type="journal article" date="2004" name="Genome Res.">
        <title>The status, quality, and expansion of the NIH full-length cDNA project: the Mammalian Gene Collection (MGC).</title>
        <authorList>
            <consortium name="The MGC Project Team"/>
        </authorList>
    </citation>
    <scope>NUCLEOTIDE SEQUENCE [LARGE SCALE MRNA]</scope>
    <source>
        <tissue>Brain</tissue>
    </source>
</reference>
<organism>
    <name type="scientific">Mus musculus</name>
    <name type="common">Mouse</name>
    <dbReference type="NCBI Taxonomy" id="10090"/>
    <lineage>
        <taxon>Eukaryota</taxon>
        <taxon>Metazoa</taxon>
        <taxon>Chordata</taxon>
        <taxon>Craniata</taxon>
        <taxon>Vertebrata</taxon>
        <taxon>Euteleostomi</taxon>
        <taxon>Mammalia</taxon>
        <taxon>Eutheria</taxon>
        <taxon>Euarchontoglires</taxon>
        <taxon>Glires</taxon>
        <taxon>Rodentia</taxon>
        <taxon>Myomorpha</taxon>
        <taxon>Muroidea</taxon>
        <taxon>Muridae</taxon>
        <taxon>Murinae</taxon>
        <taxon>Mus</taxon>
        <taxon>Mus</taxon>
    </lineage>
</organism>
<accession>Q3TZ65</accession>
<accession>B2RVV0</accession>
<sequence>MGTLSCDPEARLTTVPLARRVADGHIPETGLRKSCGIATLENGSGPGLYVLPSTVGYVNHDCTKAASPAYSLARRPSEAPLQDSSPGPVYFLDPKVTRFGRSCPPAYSMQGRAKVRGLEVTPGPGAYSPEKAPPVRQRNAPAFTLGSRLRQKPPDTSVPAPNAYTMPPLWGSQIFIKPSSPSYTVVGRTPPARPPQDPSEIPGPGQYESPDPNTYRQRRPAFSILGRPRTPRPLEDTPGPGTHNPEQVTVNRARAPAYTMGIRHSKRASTMVGDTKC</sequence>
<comment type="similarity">
    <text evidence="2">Belongs to the CIMAP family.</text>
</comment>
<proteinExistence type="evidence at transcript level"/>